<sequence>MLEEALAAIQNARDLEELKALKARYLGKKGLLTQEMKGLSALPLEERRKRGQELNAIKAALEAALEAREKALEEAALKEALERERVDVSLPGASLFSGGLHPITLMERELVEIFRALGYQAVEGPEVESEFFNFDALNIPEHHPARDMWDTFWLTGEGFRLEGPLGEEVEGRLLLRTHTSPMQVRYMVAHTPPFRIVVPGRVFRFEQTDATHEAVFHQLEGLVVGEGIAMAHLKGAIYELAQALFGPDSKVRFQPVYFPFVEPGAQFAVWWPEGGKWLELGGAGMVHPKVFQAVDAYRERLGLPPAYRGVTGFAFGLGVERLAMLRYGIPDIRYFFGGRLKFLEQFKGVL</sequence>
<evidence type="ECO:0000305" key="1"/>
<evidence type="ECO:0007829" key="2">
    <source>
        <dbReference type="PDB" id="1EIY"/>
    </source>
</evidence>
<evidence type="ECO:0007829" key="3">
    <source>
        <dbReference type="PDB" id="1JJC"/>
    </source>
</evidence>
<evidence type="ECO:0007829" key="4">
    <source>
        <dbReference type="PDB" id="3HFZ"/>
    </source>
</evidence>
<protein>
    <recommendedName>
        <fullName>Phenylalanine--tRNA ligase alpha subunit</fullName>
        <ecNumber>6.1.1.20</ecNumber>
    </recommendedName>
    <alternativeName>
        <fullName>Phenylalanyl-tRNA synthetase alpha subunit</fullName>
        <shortName>PheRS</shortName>
    </alternativeName>
</protein>
<proteinExistence type="evidence at protein level"/>
<gene>
    <name type="primary">pheS</name>
    <name type="ordered locus">TTHA1958</name>
</gene>
<name>SYFA_THET8</name>
<feature type="chain" id="PRO_0000126785" description="Phenylalanine--tRNA ligase alpha subunit">
    <location>
        <begin position="1"/>
        <end position="350"/>
    </location>
</feature>
<feature type="binding site">
    <location>
        <position position="262"/>
    </location>
    <ligand>
        <name>Mg(2+)</name>
        <dbReference type="ChEBI" id="CHEBI:18420"/>
        <note>shared with beta subunit</note>
    </ligand>
</feature>
<feature type="helix" evidence="2">
    <location>
        <begin position="9"/>
        <end position="15"/>
    </location>
</feature>
<feature type="helix" evidence="2">
    <location>
        <begin position="17"/>
        <end position="37"/>
    </location>
</feature>
<feature type="strand" evidence="2">
    <location>
        <begin position="39"/>
        <end position="42"/>
    </location>
</feature>
<feature type="turn" evidence="2">
    <location>
        <begin position="46"/>
        <end position="48"/>
    </location>
</feature>
<feature type="helix" evidence="2">
    <location>
        <begin position="49"/>
        <end position="52"/>
    </location>
</feature>
<feature type="helix" evidence="2">
    <location>
        <begin position="55"/>
        <end position="58"/>
    </location>
</feature>
<feature type="helix" evidence="2">
    <location>
        <begin position="60"/>
        <end position="70"/>
    </location>
</feature>
<feature type="helix" evidence="2">
    <location>
        <begin position="73"/>
        <end position="83"/>
    </location>
</feature>
<feature type="strand" evidence="4">
    <location>
        <begin position="88"/>
        <end position="90"/>
    </location>
</feature>
<feature type="helix" evidence="3">
    <location>
        <begin position="102"/>
        <end position="115"/>
    </location>
</feature>
<feature type="turn" evidence="3">
    <location>
        <begin position="116"/>
        <end position="118"/>
    </location>
</feature>
<feature type="strand" evidence="3">
    <location>
        <begin position="126"/>
        <end position="129"/>
    </location>
</feature>
<feature type="helix" evidence="3">
    <location>
        <begin position="130"/>
        <end position="133"/>
    </location>
</feature>
<feature type="helix" evidence="3">
    <location>
        <begin position="135"/>
        <end position="137"/>
    </location>
</feature>
<feature type="helix" evidence="3">
    <location>
        <begin position="144"/>
        <end position="148"/>
    </location>
</feature>
<feature type="strand" evidence="3">
    <location>
        <begin position="153"/>
        <end position="155"/>
    </location>
</feature>
<feature type="strand" evidence="3">
    <location>
        <begin position="173"/>
        <end position="175"/>
    </location>
</feature>
<feature type="strand" evidence="3">
    <location>
        <begin position="177"/>
        <end position="179"/>
    </location>
</feature>
<feature type="helix" evidence="3">
    <location>
        <begin position="181"/>
        <end position="189"/>
    </location>
</feature>
<feature type="strand" evidence="3">
    <location>
        <begin position="192"/>
        <end position="203"/>
    </location>
</feature>
<feature type="strand" evidence="2">
    <location>
        <begin position="209"/>
        <end position="211"/>
    </location>
</feature>
<feature type="strand" evidence="3">
    <location>
        <begin position="214"/>
        <end position="225"/>
    </location>
</feature>
<feature type="helix" evidence="3">
    <location>
        <begin position="230"/>
        <end position="245"/>
    </location>
</feature>
<feature type="strand" evidence="3">
    <location>
        <begin position="251"/>
        <end position="255"/>
    </location>
</feature>
<feature type="strand" evidence="3">
    <location>
        <begin position="261"/>
        <end position="271"/>
    </location>
</feature>
<feature type="helix" evidence="3">
    <location>
        <begin position="272"/>
        <end position="274"/>
    </location>
</feature>
<feature type="strand" evidence="3">
    <location>
        <begin position="276"/>
        <end position="286"/>
    </location>
</feature>
<feature type="helix" evidence="3">
    <location>
        <begin position="288"/>
        <end position="299"/>
    </location>
</feature>
<feature type="turn" evidence="3">
    <location>
        <begin position="300"/>
        <end position="302"/>
    </location>
</feature>
<feature type="strand" evidence="3">
    <location>
        <begin position="311"/>
        <end position="318"/>
    </location>
</feature>
<feature type="helix" evidence="3">
    <location>
        <begin position="319"/>
        <end position="327"/>
    </location>
</feature>
<feature type="helix" evidence="3">
    <location>
        <begin position="332"/>
        <end position="334"/>
    </location>
</feature>
<feature type="turn" evidence="3">
    <location>
        <begin position="335"/>
        <end position="337"/>
    </location>
</feature>
<feature type="helix" evidence="3">
    <location>
        <begin position="340"/>
        <end position="343"/>
    </location>
</feature>
<feature type="helix" evidence="3">
    <location>
        <begin position="344"/>
        <end position="349"/>
    </location>
</feature>
<keyword id="KW-0002">3D-structure</keyword>
<keyword id="KW-0030">Aminoacyl-tRNA synthetase</keyword>
<keyword id="KW-0067">ATP-binding</keyword>
<keyword id="KW-0963">Cytoplasm</keyword>
<keyword id="KW-0903">Direct protein sequencing</keyword>
<keyword id="KW-0436">Ligase</keyword>
<keyword id="KW-0460">Magnesium</keyword>
<keyword id="KW-0479">Metal-binding</keyword>
<keyword id="KW-0547">Nucleotide-binding</keyword>
<keyword id="KW-0648">Protein biosynthesis</keyword>
<keyword id="KW-1185">Reference proteome</keyword>
<organism>
    <name type="scientific">Thermus thermophilus (strain ATCC 27634 / DSM 579 / HB8)</name>
    <dbReference type="NCBI Taxonomy" id="300852"/>
    <lineage>
        <taxon>Bacteria</taxon>
        <taxon>Thermotogati</taxon>
        <taxon>Deinococcota</taxon>
        <taxon>Deinococci</taxon>
        <taxon>Thermales</taxon>
        <taxon>Thermaceae</taxon>
        <taxon>Thermus</taxon>
    </lineage>
</organism>
<dbReference type="EC" id="6.1.1.20"/>
<dbReference type="EMBL" id="Z12118">
    <property type="protein sequence ID" value="CAA78104.1"/>
    <property type="molecule type" value="Genomic_DNA"/>
</dbReference>
<dbReference type="EMBL" id="X65609">
    <property type="protein sequence ID" value="CAA46559.1"/>
    <property type="molecule type" value="Genomic_DNA"/>
</dbReference>
<dbReference type="EMBL" id="Y15464">
    <property type="protein sequence ID" value="CAA75644.1"/>
    <property type="molecule type" value="Genomic_DNA"/>
</dbReference>
<dbReference type="EMBL" id="AP008226">
    <property type="protein sequence ID" value="BAD71781.1"/>
    <property type="molecule type" value="Genomic_DNA"/>
</dbReference>
<dbReference type="RefSeq" id="WP_011229046.1">
    <property type="nucleotide sequence ID" value="NC_006461.1"/>
</dbReference>
<dbReference type="RefSeq" id="YP_145224.1">
    <property type="nucleotide sequence ID" value="NC_006461.1"/>
</dbReference>
<dbReference type="PDB" id="1EIY">
    <property type="method" value="X-ray"/>
    <property type="resolution" value="3.30 A"/>
    <property type="chains" value="A=1-350"/>
</dbReference>
<dbReference type="PDB" id="1JJC">
    <property type="method" value="X-ray"/>
    <property type="resolution" value="2.60 A"/>
    <property type="chains" value="A=1-350"/>
</dbReference>
<dbReference type="PDB" id="1PYS">
    <property type="method" value="X-ray"/>
    <property type="resolution" value="2.90 A"/>
    <property type="chains" value="A=1-350"/>
</dbReference>
<dbReference type="PDB" id="3HFZ">
    <property type="method" value="X-ray"/>
    <property type="resolution" value="2.90 A"/>
    <property type="chains" value="A=1-350"/>
</dbReference>
<dbReference type="PDBsum" id="1EIY"/>
<dbReference type="PDBsum" id="1JJC"/>
<dbReference type="PDBsum" id="1PYS"/>
<dbReference type="PDBsum" id="3HFZ"/>
<dbReference type="SMR" id="Q5SGX2"/>
<dbReference type="EnsemblBacteria" id="BAD71781">
    <property type="protein sequence ID" value="BAD71781"/>
    <property type="gene ID" value="BAD71781"/>
</dbReference>
<dbReference type="GeneID" id="3169731"/>
<dbReference type="KEGG" id="ttj:TTHA1958"/>
<dbReference type="PATRIC" id="fig|300852.9.peg.1930"/>
<dbReference type="eggNOG" id="COG0016">
    <property type="taxonomic scope" value="Bacteria"/>
</dbReference>
<dbReference type="HOGENOM" id="CLU_025086_0_1_0"/>
<dbReference type="PhylomeDB" id="Q5SGX2"/>
<dbReference type="BRENDA" id="6.1.1.20">
    <property type="organism ID" value="2305"/>
</dbReference>
<dbReference type="EvolutionaryTrace" id="Q5SGX2"/>
<dbReference type="PRO" id="PR:Q5SGX2"/>
<dbReference type="Proteomes" id="UP000000532">
    <property type="component" value="Chromosome"/>
</dbReference>
<dbReference type="GO" id="GO:0005737">
    <property type="term" value="C:cytoplasm"/>
    <property type="evidence" value="ECO:0007669"/>
    <property type="project" value="UniProtKB-SubCell"/>
</dbReference>
<dbReference type="GO" id="GO:0005524">
    <property type="term" value="F:ATP binding"/>
    <property type="evidence" value="ECO:0007669"/>
    <property type="project" value="UniProtKB-UniRule"/>
</dbReference>
<dbReference type="GO" id="GO:0000287">
    <property type="term" value="F:magnesium ion binding"/>
    <property type="evidence" value="ECO:0007669"/>
    <property type="project" value="UniProtKB-UniRule"/>
</dbReference>
<dbReference type="GO" id="GO:0004826">
    <property type="term" value="F:phenylalanine-tRNA ligase activity"/>
    <property type="evidence" value="ECO:0007669"/>
    <property type="project" value="UniProtKB-UniRule"/>
</dbReference>
<dbReference type="GO" id="GO:0000049">
    <property type="term" value="F:tRNA binding"/>
    <property type="evidence" value="ECO:0007669"/>
    <property type="project" value="InterPro"/>
</dbReference>
<dbReference type="GO" id="GO:0006432">
    <property type="term" value="P:phenylalanyl-tRNA aminoacylation"/>
    <property type="evidence" value="ECO:0007669"/>
    <property type="project" value="UniProtKB-UniRule"/>
</dbReference>
<dbReference type="CDD" id="cd00496">
    <property type="entry name" value="PheRS_alpha_core"/>
    <property type="match status" value="1"/>
</dbReference>
<dbReference type="Gene3D" id="3.30.930.10">
    <property type="entry name" value="Bira Bifunctional Protein, Domain 2"/>
    <property type="match status" value="1"/>
</dbReference>
<dbReference type="HAMAP" id="MF_00281">
    <property type="entry name" value="Phe_tRNA_synth_alpha1"/>
    <property type="match status" value="1"/>
</dbReference>
<dbReference type="InterPro" id="IPR006195">
    <property type="entry name" value="aa-tRNA-synth_II"/>
</dbReference>
<dbReference type="InterPro" id="IPR045864">
    <property type="entry name" value="aa-tRNA-synth_II/BPL/LPL"/>
</dbReference>
<dbReference type="InterPro" id="IPR004529">
    <property type="entry name" value="Phe-tRNA-synth_IIc_asu"/>
</dbReference>
<dbReference type="InterPro" id="IPR004188">
    <property type="entry name" value="Phe-tRNA_ligase_II_N"/>
</dbReference>
<dbReference type="InterPro" id="IPR022911">
    <property type="entry name" value="Phe_tRNA_ligase_alpha1_bac"/>
</dbReference>
<dbReference type="InterPro" id="IPR002319">
    <property type="entry name" value="Phenylalanyl-tRNA_Synthase"/>
</dbReference>
<dbReference type="InterPro" id="IPR010978">
    <property type="entry name" value="tRNA-bd_arm"/>
</dbReference>
<dbReference type="NCBIfam" id="TIGR00468">
    <property type="entry name" value="pheS"/>
    <property type="match status" value="1"/>
</dbReference>
<dbReference type="PANTHER" id="PTHR11538:SF41">
    <property type="entry name" value="PHENYLALANINE--TRNA LIGASE, MITOCHONDRIAL"/>
    <property type="match status" value="1"/>
</dbReference>
<dbReference type="PANTHER" id="PTHR11538">
    <property type="entry name" value="PHENYLALANYL-TRNA SYNTHETASE"/>
    <property type="match status" value="1"/>
</dbReference>
<dbReference type="Pfam" id="PF02912">
    <property type="entry name" value="Phe_tRNA-synt_N"/>
    <property type="match status" value="1"/>
</dbReference>
<dbReference type="Pfam" id="PF01409">
    <property type="entry name" value="tRNA-synt_2d"/>
    <property type="match status" value="1"/>
</dbReference>
<dbReference type="SUPFAM" id="SSF55681">
    <property type="entry name" value="Class II aaRS and biotin synthetases"/>
    <property type="match status" value="1"/>
</dbReference>
<dbReference type="SUPFAM" id="SSF46589">
    <property type="entry name" value="tRNA-binding arm"/>
    <property type="match status" value="1"/>
</dbReference>
<dbReference type="PROSITE" id="PS50862">
    <property type="entry name" value="AA_TRNA_LIGASE_II"/>
    <property type="match status" value="1"/>
</dbReference>
<accession>Q5SGX2</accession>
<comment type="catalytic activity">
    <reaction>
        <text>tRNA(Phe) + L-phenylalanine + ATP = L-phenylalanyl-tRNA(Phe) + AMP + diphosphate + H(+)</text>
        <dbReference type="Rhea" id="RHEA:19413"/>
        <dbReference type="Rhea" id="RHEA-COMP:9668"/>
        <dbReference type="Rhea" id="RHEA-COMP:9699"/>
        <dbReference type="ChEBI" id="CHEBI:15378"/>
        <dbReference type="ChEBI" id="CHEBI:30616"/>
        <dbReference type="ChEBI" id="CHEBI:33019"/>
        <dbReference type="ChEBI" id="CHEBI:58095"/>
        <dbReference type="ChEBI" id="CHEBI:78442"/>
        <dbReference type="ChEBI" id="CHEBI:78531"/>
        <dbReference type="ChEBI" id="CHEBI:456215"/>
        <dbReference type="EC" id="6.1.1.20"/>
    </reaction>
</comment>
<comment type="cofactor">
    <cofactor>
        <name>Mg(2+)</name>
        <dbReference type="ChEBI" id="CHEBI:18420"/>
    </cofactor>
    <text>Binds 2 magnesium ions per tetramer.</text>
</comment>
<comment type="subunit">
    <text>Tetramer of two alpha and two beta subunits.</text>
</comment>
<comment type="subcellular location">
    <subcellularLocation>
        <location>Cytoplasm</location>
    </subcellularLocation>
</comment>
<comment type="similarity">
    <text evidence="1">Belongs to the class-II aminoacyl-tRNA synthetase family. Phe-tRNA synthetase alpha subunit type 1 subfamily.</text>
</comment>
<reference key="1">
    <citation type="journal article" date="1992" name="FEBS Lett.">
        <title>Cloning and sequence analysis of the phenylalanyl-tRNA synthetase genes (pheST) from Thermus thermophilus.</title>
        <authorList>
            <person name="Keller B."/>
            <person name="Kast P."/>
            <person name="Hennecke H."/>
        </authorList>
    </citation>
    <scope>NUCLEOTIDE SEQUENCE [GENOMIC DNA]</scope>
</reference>
<reference key="2">
    <citation type="journal article" date="1992" name="Nucleic Acids Res.">
        <title>Structure of the phenylalanyl-tRNA synthetase genes from Thermus thermophilus HB8 and their expression in Escherichia coli.</title>
        <authorList>
            <person name="Kreutzer R."/>
            <person name="Kruft V."/>
            <person name="Bobkova E.V."/>
            <person name="Lavrik O.J."/>
            <person name="Sprinzl M."/>
        </authorList>
    </citation>
    <scope>NUCLEOTIDE SEQUENCE [GENOMIC DNA]</scope>
    <scope>PROTEIN SEQUENCE OF 1-29</scope>
</reference>
<reference key="3">
    <citation type="submission" date="1997-11" db="EMBL/GenBank/DDBJ databases">
        <authorList>
            <person name="Lechler A."/>
            <person name="Kreutzer R."/>
        </authorList>
    </citation>
    <scope>NUCLEOTIDE SEQUENCE [GENOMIC DNA]</scope>
</reference>
<reference key="4">
    <citation type="submission" date="2004-11" db="EMBL/GenBank/DDBJ databases">
        <title>Complete genome sequence of Thermus thermophilus HB8.</title>
        <authorList>
            <person name="Masui R."/>
            <person name="Kurokawa K."/>
            <person name="Nakagawa N."/>
            <person name="Tokunaga F."/>
            <person name="Koyama Y."/>
            <person name="Shibata T."/>
            <person name="Oshima T."/>
            <person name="Yokoyama S."/>
            <person name="Yasunaga T."/>
            <person name="Kuramitsu S."/>
        </authorList>
    </citation>
    <scope>NUCLEOTIDE SEQUENCE [LARGE SCALE GENOMIC DNA]</scope>
    <source>
        <strain>ATCC 27634 / DSM 579 / HB8</strain>
    </source>
</reference>
<reference key="5">
    <citation type="journal article" date="1993" name="Biochimie">
        <title>Phenylalanyl-tRNA synthetase from Thermus thermophilus has four antiparallel folds of which only two are catalytically functional.</title>
        <authorList>
            <person name="Mosyak L."/>
            <person name="Safro M."/>
        </authorList>
    </citation>
    <scope>X-RAY CRYSTALLOGRAPHY (2.9 ANGSTROMS)</scope>
</reference>
<reference key="6">
    <citation type="journal article" date="1995" name="Nat. Struct. Biol.">
        <title>Structure of phenylalanyl-tRNA synthetase from Thermus thermophilus.</title>
        <authorList>
            <person name="Mosyak L."/>
            <person name="Reshetnikova L."/>
            <person name="Goldgur Y."/>
            <person name="Delarue M."/>
            <person name="Safro M.G."/>
        </authorList>
    </citation>
    <scope>X-RAY CRYSTALLOGRAPHY (2.9 ANGSTROMS)</scope>
</reference>